<organism>
    <name type="scientific">Methanosphaera stadtmanae (strain ATCC 43021 / DSM 3091 / JCM 11832 / MCB-3)</name>
    <dbReference type="NCBI Taxonomy" id="339860"/>
    <lineage>
        <taxon>Archaea</taxon>
        <taxon>Methanobacteriati</taxon>
        <taxon>Methanobacteriota</taxon>
        <taxon>Methanomada group</taxon>
        <taxon>Methanobacteria</taxon>
        <taxon>Methanobacteriales</taxon>
        <taxon>Methanobacteriaceae</taxon>
        <taxon>Methanosphaera</taxon>
    </lineage>
</organism>
<reference key="1">
    <citation type="journal article" date="2006" name="J. Bacteriol.">
        <title>The genome sequence of Methanosphaera stadtmanae reveals why this human intestinal archaeon is restricted to methanol and H2 for methane formation and ATP synthesis.</title>
        <authorList>
            <person name="Fricke W.F."/>
            <person name="Seedorf H."/>
            <person name="Henne A."/>
            <person name="Kruer M."/>
            <person name="Liesegang H."/>
            <person name="Hedderich R."/>
            <person name="Gottschalk G."/>
            <person name="Thauer R.K."/>
        </authorList>
    </citation>
    <scope>NUCLEOTIDE SEQUENCE [LARGE SCALE GENOMIC DNA]</scope>
    <source>
        <strain>ATCC 43021 / DSM 3091 / JCM 11832 / MCB-3</strain>
    </source>
</reference>
<protein>
    <recommendedName>
        <fullName evidence="1">Large ribosomal subunit protein uL14</fullName>
    </recommendedName>
    <alternativeName>
        <fullName evidence="2">50S ribosomal protein L14</fullName>
    </alternativeName>
</protein>
<keyword id="KW-1185">Reference proteome</keyword>
<keyword id="KW-0687">Ribonucleoprotein</keyword>
<keyword id="KW-0689">Ribosomal protein</keyword>
<keyword id="KW-0694">RNA-binding</keyword>
<keyword id="KW-0699">rRNA-binding</keyword>
<proteinExistence type="inferred from homology"/>
<feature type="chain" id="PRO_0000266606" description="Large ribosomal subunit protein uL14">
    <location>
        <begin position="1"/>
        <end position="132"/>
    </location>
</feature>
<name>RL14_METST</name>
<dbReference type="EMBL" id="CP000102">
    <property type="protein sequence ID" value="ABC57286.1"/>
    <property type="molecule type" value="Genomic_DNA"/>
</dbReference>
<dbReference type="SMR" id="Q2NFW7"/>
<dbReference type="STRING" id="339860.Msp_0898"/>
<dbReference type="KEGG" id="mst:Msp_0898"/>
<dbReference type="eggNOG" id="arCOG04095">
    <property type="taxonomic scope" value="Archaea"/>
</dbReference>
<dbReference type="HOGENOM" id="CLU_095071_3_0_2"/>
<dbReference type="OrthoDB" id="23569at2157"/>
<dbReference type="Proteomes" id="UP000001931">
    <property type="component" value="Chromosome"/>
</dbReference>
<dbReference type="GO" id="GO:0022625">
    <property type="term" value="C:cytosolic large ribosomal subunit"/>
    <property type="evidence" value="ECO:0007669"/>
    <property type="project" value="TreeGrafter"/>
</dbReference>
<dbReference type="GO" id="GO:0070180">
    <property type="term" value="F:large ribosomal subunit rRNA binding"/>
    <property type="evidence" value="ECO:0007669"/>
    <property type="project" value="TreeGrafter"/>
</dbReference>
<dbReference type="GO" id="GO:0003735">
    <property type="term" value="F:structural constituent of ribosome"/>
    <property type="evidence" value="ECO:0007669"/>
    <property type="project" value="InterPro"/>
</dbReference>
<dbReference type="GO" id="GO:0006412">
    <property type="term" value="P:translation"/>
    <property type="evidence" value="ECO:0007669"/>
    <property type="project" value="UniProtKB-UniRule"/>
</dbReference>
<dbReference type="CDD" id="cd00337">
    <property type="entry name" value="Ribosomal_uL14"/>
    <property type="match status" value="1"/>
</dbReference>
<dbReference type="FunFam" id="2.40.150.20:FF:000007">
    <property type="entry name" value="50S ribosomal protein L14"/>
    <property type="match status" value="1"/>
</dbReference>
<dbReference type="Gene3D" id="2.40.150.20">
    <property type="entry name" value="Ribosomal protein L14"/>
    <property type="match status" value="1"/>
</dbReference>
<dbReference type="HAMAP" id="MF_01367">
    <property type="entry name" value="Ribosomal_uL14"/>
    <property type="match status" value="1"/>
</dbReference>
<dbReference type="InterPro" id="IPR000218">
    <property type="entry name" value="Ribosomal_uL14"/>
</dbReference>
<dbReference type="InterPro" id="IPR019971">
    <property type="entry name" value="Ribosomal_uL14_arc"/>
</dbReference>
<dbReference type="InterPro" id="IPR019972">
    <property type="entry name" value="Ribosomal_uL14_CS"/>
</dbReference>
<dbReference type="InterPro" id="IPR036853">
    <property type="entry name" value="Ribosomal_uL14_sf"/>
</dbReference>
<dbReference type="NCBIfam" id="NF006344">
    <property type="entry name" value="PRK08571.1"/>
    <property type="match status" value="1"/>
</dbReference>
<dbReference type="NCBIfam" id="TIGR03673">
    <property type="entry name" value="uL14_arch"/>
    <property type="match status" value="1"/>
</dbReference>
<dbReference type="PANTHER" id="PTHR11761">
    <property type="entry name" value="50S/60S RIBOSOMAL PROTEIN L14/L23"/>
    <property type="match status" value="1"/>
</dbReference>
<dbReference type="PANTHER" id="PTHR11761:SF8">
    <property type="entry name" value="LARGE RIBOSOMAL SUBUNIT PROTEIN UL14"/>
    <property type="match status" value="1"/>
</dbReference>
<dbReference type="Pfam" id="PF00238">
    <property type="entry name" value="Ribosomal_L14"/>
    <property type="match status" value="1"/>
</dbReference>
<dbReference type="SMART" id="SM01374">
    <property type="entry name" value="Ribosomal_L14"/>
    <property type="match status" value="1"/>
</dbReference>
<dbReference type="SUPFAM" id="SSF50193">
    <property type="entry name" value="Ribosomal protein L14"/>
    <property type="match status" value="1"/>
</dbReference>
<dbReference type="PROSITE" id="PS00049">
    <property type="entry name" value="RIBOSOMAL_L14"/>
    <property type="match status" value="1"/>
</dbReference>
<sequence>MKAITSNVSKSLPIGARLKCIDNTGAREVEIISVKGFKGVRRRLASAGVGDMVVISVKKGTADMRREVTTAVVVRQKKEYRRADGLRVKFEDNAAVIITEDGVLKGSEIRGPIAKEAADLWPAIGSAASIIV</sequence>
<gene>
    <name evidence="1" type="primary">rpl14</name>
    <name type="ordered locus">Msp_0898</name>
</gene>
<comment type="function">
    <text evidence="1">Binds to 23S rRNA. Forms part of two intersubunit bridges in the 70S ribosome.</text>
</comment>
<comment type="subunit">
    <text evidence="1">Part of the 50S ribosomal subunit. Forms a cluster with proteins L3 and L24e, part of which may contact the 16S rRNA in 2 intersubunit bridges.</text>
</comment>
<comment type="similarity">
    <text evidence="1">Belongs to the universal ribosomal protein uL14 family.</text>
</comment>
<evidence type="ECO:0000255" key="1">
    <source>
        <dbReference type="HAMAP-Rule" id="MF_01367"/>
    </source>
</evidence>
<evidence type="ECO:0000305" key="2"/>
<accession>Q2NFW7</accession>